<accession>Q9NPG4</accession>
<accession>Q6UXB6</accession>
<accession>Q96KB8</accession>
<accession>Q9H7Y6</accession>
<accession>Q9H8E0</accession>
<protein>
    <recommendedName>
        <fullName evidence="13">Protocadherin-12</fullName>
    </recommendedName>
    <alternativeName>
        <fullName evidence="11">Vascular cadherin-2</fullName>
    </alternativeName>
    <alternativeName>
        <fullName evidence="11">Vascular endothelial cadherin-2</fullName>
        <shortName evidence="11">VE-cad-2</shortName>
        <shortName evidence="11">VE-cadherin-2</shortName>
    </alternativeName>
    <component>
        <recommendedName>
            <fullName evidence="13">Protocadherin-12, secreted form</fullName>
        </recommendedName>
    </component>
</protein>
<reference key="1">
    <citation type="journal article" date="2000" name="Proc. Natl. Acad. Sci. U.S.A.">
        <title>Large exons encoding multiple ectodomains are a characteristic feature of protocadherin genes.</title>
        <authorList>
            <person name="Wu Q."/>
            <person name="Maniatis T."/>
        </authorList>
    </citation>
    <scope>NUCLEOTIDE SEQUENCE [MRNA]</scope>
</reference>
<reference key="2">
    <citation type="journal article" date="2000" name="Mamm. Genome">
        <title>cDNA cloning, chromosomal mapping, and expression analysis of human VE-cadherin-2.</title>
        <authorList>
            <person name="Ludwig D."/>
            <person name="Lorenz J."/>
            <person name="Dejana E."/>
            <person name="Bohlen P."/>
            <person name="Hicklin D.J."/>
            <person name="Witte L."/>
            <person name="Pytowski B."/>
        </authorList>
    </citation>
    <scope>NUCLEOTIDE SEQUENCE [MRNA]</scope>
    <scope>TISSUE SPECIFICITY</scope>
    <source>
        <tissue>Fetal kidney</tissue>
    </source>
</reference>
<reference key="3">
    <citation type="submission" date="1999-04" db="EMBL/GenBank/DDBJ databases">
        <title>Human vascular cadherin-2.</title>
        <authorList>
            <person name="Seki N."/>
            <person name="Hattori A."/>
            <person name="Hayashi A."/>
            <person name="Kozuma S."/>
            <person name="Muramatsu M."/>
            <person name="Saito T."/>
        </authorList>
    </citation>
    <scope>NUCLEOTIDE SEQUENCE [MRNA]</scope>
</reference>
<reference key="4">
    <citation type="journal article" date="2004" name="Nat. Genet.">
        <title>Complete sequencing and characterization of 21,243 full-length human cDNAs.</title>
        <authorList>
            <person name="Ota T."/>
            <person name="Suzuki Y."/>
            <person name="Nishikawa T."/>
            <person name="Otsuki T."/>
            <person name="Sugiyama T."/>
            <person name="Irie R."/>
            <person name="Wakamatsu A."/>
            <person name="Hayashi K."/>
            <person name="Sato H."/>
            <person name="Nagai K."/>
            <person name="Kimura K."/>
            <person name="Makita H."/>
            <person name="Sekine M."/>
            <person name="Obayashi M."/>
            <person name="Nishi T."/>
            <person name="Shibahara T."/>
            <person name="Tanaka T."/>
            <person name="Ishii S."/>
            <person name="Yamamoto J."/>
            <person name="Saito K."/>
            <person name="Kawai Y."/>
            <person name="Isono Y."/>
            <person name="Nakamura Y."/>
            <person name="Nagahari K."/>
            <person name="Murakami K."/>
            <person name="Yasuda T."/>
            <person name="Iwayanagi T."/>
            <person name="Wagatsuma M."/>
            <person name="Shiratori A."/>
            <person name="Sudo H."/>
            <person name="Hosoiri T."/>
            <person name="Kaku Y."/>
            <person name="Kodaira H."/>
            <person name="Kondo H."/>
            <person name="Sugawara M."/>
            <person name="Takahashi M."/>
            <person name="Kanda K."/>
            <person name="Yokoi T."/>
            <person name="Furuya T."/>
            <person name="Kikkawa E."/>
            <person name="Omura Y."/>
            <person name="Abe K."/>
            <person name="Kamihara K."/>
            <person name="Katsuta N."/>
            <person name="Sato K."/>
            <person name="Tanikawa M."/>
            <person name="Yamazaki M."/>
            <person name="Ninomiya K."/>
            <person name="Ishibashi T."/>
            <person name="Yamashita H."/>
            <person name="Murakawa K."/>
            <person name="Fujimori K."/>
            <person name="Tanai H."/>
            <person name="Kimata M."/>
            <person name="Watanabe M."/>
            <person name="Hiraoka S."/>
            <person name="Chiba Y."/>
            <person name="Ishida S."/>
            <person name="Ono Y."/>
            <person name="Takiguchi S."/>
            <person name="Watanabe S."/>
            <person name="Yosida M."/>
            <person name="Hotuta T."/>
            <person name="Kusano J."/>
            <person name="Kanehori K."/>
            <person name="Takahashi-Fujii A."/>
            <person name="Hara H."/>
            <person name="Tanase T.-O."/>
            <person name="Nomura Y."/>
            <person name="Togiya S."/>
            <person name="Komai F."/>
            <person name="Hara R."/>
            <person name="Takeuchi K."/>
            <person name="Arita M."/>
            <person name="Imose N."/>
            <person name="Musashino K."/>
            <person name="Yuuki H."/>
            <person name="Oshima A."/>
            <person name="Sasaki N."/>
            <person name="Aotsuka S."/>
            <person name="Yoshikawa Y."/>
            <person name="Matsunawa H."/>
            <person name="Ichihara T."/>
            <person name="Shiohata N."/>
            <person name="Sano S."/>
            <person name="Moriya S."/>
            <person name="Momiyama H."/>
            <person name="Satoh N."/>
            <person name="Takami S."/>
            <person name="Terashima Y."/>
            <person name="Suzuki O."/>
            <person name="Nakagawa S."/>
            <person name="Senoh A."/>
            <person name="Mizoguchi H."/>
            <person name="Goto Y."/>
            <person name="Shimizu F."/>
            <person name="Wakebe H."/>
            <person name="Hishigaki H."/>
            <person name="Watanabe T."/>
            <person name="Sugiyama A."/>
            <person name="Takemoto M."/>
            <person name="Kawakami B."/>
            <person name="Yamazaki M."/>
            <person name="Watanabe K."/>
            <person name="Kumagai A."/>
            <person name="Itakura S."/>
            <person name="Fukuzumi Y."/>
            <person name="Fujimori Y."/>
            <person name="Komiyama M."/>
            <person name="Tashiro H."/>
            <person name="Tanigami A."/>
            <person name="Fujiwara T."/>
            <person name="Ono T."/>
            <person name="Yamada K."/>
            <person name="Fujii Y."/>
            <person name="Ozaki K."/>
            <person name="Hirao M."/>
            <person name="Ohmori Y."/>
            <person name="Kawabata A."/>
            <person name="Hikiji T."/>
            <person name="Kobatake N."/>
            <person name="Inagaki H."/>
            <person name="Ikema Y."/>
            <person name="Okamoto S."/>
            <person name="Okitani R."/>
            <person name="Kawakami T."/>
            <person name="Noguchi S."/>
            <person name="Itoh T."/>
            <person name="Shigeta K."/>
            <person name="Senba T."/>
            <person name="Matsumura K."/>
            <person name="Nakajima Y."/>
            <person name="Mizuno T."/>
            <person name="Morinaga M."/>
            <person name="Sasaki M."/>
            <person name="Togashi T."/>
            <person name="Oyama M."/>
            <person name="Hata H."/>
            <person name="Watanabe M."/>
            <person name="Komatsu T."/>
            <person name="Mizushima-Sugano J."/>
            <person name="Satoh T."/>
            <person name="Shirai Y."/>
            <person name="Takahashi Y."/>
            <person name="Nakagawa K."/>
            <person name="Okumura K."/>
            <person name="Nagase T."/>
            <person name="Nomura N."/>
            <person name="Kikuchi H."/>
            <person name="Masuho Y."/>
            <person name="Yamashita R."/>
            <person name="Nakai K."/>
            <person name="Yada T."/>
            <person name="Nakamura Y."/>
            <person name="Ohara O."/>
            <person name="Isogai T."/>
            <person name="Sugano S."/>
        </authorList>
    </citation>
    <scope>NUCLEOTIDE SEQUENCE [LARGE SCALE MRNA]</scope>
    <scope>VARIANTS ASN-385 AND ASN-640</scope>
    <source>
        <tissue>Embryo</tissue>
        <tissue>Placenta</tissue>
    </source>
</reference>
<reference key="5">
    <citation type="journal article" date="2003" name="Genome Res.">
        <title>The secreted protein discovery initiative (SPDI), a large-scale effort to identify novel human secreted and transmembrane proteins: a bioinformatics assessment.</title>
        <authorList>
            <person name="Clark H.F."/>
            <person name="Gurney A.L."/>
            <person name="Abaya E."/>
            <person name="Baker K."/>
            <person name="Baldwin D.T."/>
            <person name="Brush J."/>
            <person name="Chen J."/>
            <person name="Chow B."/>
            <person name="Chui C."/>
            <person name="Crowley C."/>
            <person name="Currell B."/>
            <person name="Deuel B."/>
            <person name="Dowd P."/>
            <person name="Eaton D."/>
            <person name="Foster J.S."/>
            <person name="Grimaldi C."/>
            <person name="Gu Q."/>
            <person name="Hass P.E."/>
            <person name="Heldens S."/>
            <person name="Huang A."/>
            <person name="Kim H.S."/>
            <person name="Klimowski L."/>
            <person name="Jin Y."/>
            <person name="Johnson S."/>
            <person name="Lee J."/>
            <person name="Lewis L."/>
            <person name="Liao D."/>
            <person name="Mark M.R."/>
            <person name="Robbie E."/>
            <person name="Sanchez C."/>
            <person name="Schoenfeld J."/>
            <person name="Seshagiri S."/>
            <person name="Simmons L."/>
            <person name="Singh J."/>
            <person name="Smith V."/>
            <person name="Stinson J."/>
            <person name="Vagts A."/>
            <person name="Vandlen R.L."/>
            <person name="Watanabe C."/>
            <person name="Wieand D."/>
            <person name="Woods K."/>
            <person name="Xie M.-H."/>
            <person name="Yansura D.G."/>
            <person name="Yi S."/>
            <person name="Yu G."/>
            <person name="Yuan J."/>
            <person name="Zhang M."/>
            <person name="Zhang Z."/>
            <person name="Goddard A.D."/>
            <person name="Wood W.I."/>
            <person name="Godowski P.J."/>
            <person name="Gray A.M."/>
        </authorList>
    </citation>
    <scope>NUCLEOTIDE SEQUENCE [LARGE SCALE MRNA]</scope>
    <scope>VARIANT ASN-640</scope>
</reference>
<reference key="6">
    <citation type="journal article" date="2011" name="J. Biol. Chem.">
        <title>Protocadherin-12 cleavage is a regulated process mediated by ADAM10 protein: evidence of shedding up-regulation in pre-eclampsia.</title>
        <authorList>
            <person name="Bouillot S."/>
            <person name="Tillet E."/>
            <person name="Carmona G."/>
            <person name="Prandini M.H."/>
            <person name="Gauchez A.S."/>
            <person name="Hoffmann P."/>
            <person name="Alfaidy N."/>
            <person name="Cand F."/>
            <person name="Huber P."/>
        </authorList>
    </citation>
    <scope>FUNCTION</scope>
    <scope>SUBCELLULAR LOCATION</scope>
    <scope>PROTEOLYTIC PROCESSING</scope>
</reference>
<reference key="7">
    <citation type="journal article" date="2014" name="J. Proteomics">
        <title>An enzyme assisted RP-RPLC approach for in-depth analysis of human liver phosphoproteome.</title>
        <authorList>
            <person name="Bian Y."/>
            <person name="Song C."/>
            <person name="Cheng K."/>
            <person name="Dong M."/>
            <person name="Wang F."/>
            <person name="Huang J."/>
            <person name="Sun D."/>
            <person name="Wang L."/>
            <person name="Ye M."/>
            <person name="Zou H."/>
        </authorList>
    </citation>
    <scope>PHOSPHORYLATION [LARGE SCALE ANALYSIS] AT SER-1062</scope>
    <scope>IDENTIFICATION BY MASS SPECTROMETRY [LARGE SCALE ANALYSIS]</scope>
    <source>
        <tissue>Liver</tissue>
    </source>
</reference>
<reference key="8">
    <citation type="journal article" date="2016" name="Neurology">
        <title>Loss of function of PCDH12 underlies recessive microcephaly mimicking intrauterine infection.</title>
        <authorList>
            <person name="Aran A."/>
            <person name="Rosenfeld N."/>
            <person name="Jaron R."/>
            <person name="Renbaum P."/>
            <person name="Zuckerman S."/>
            <person name="Fridman H."/>
            <person name="Zeligson S."/>
            <person name="Segel R."/>
            <person name="Kohn Y."/>
            <person name="Kamal L."/>
            <person name="Kanaan M."/>
            <person name="Segev Y."/>
            <person name="Mazaki E."/>
            <person name="Rabinowitz R."/>
            <person name="Shen O."/>
            <person name="Lee M."/>
            <person name="Walsh T."/>
            <person name="King M.C."/>
            <person name="Gulsuner S."/>
            <person name="Levy-Lahad E."/>
        </authorList>
    </citation>
    <scope>INVOLVEMENT IN DMJDS1</scope>
    <scope>VARIANT DMJDS1 839-ARG--LEU-1184 DEL</scope>
</reference>
<reference key="9">
    <citation type="journal article" date="2017" name="Neurol. Genet.">
        <title>variants.</title>
        <authorList>
            <person name="Nicolas G."/>
            <person name="Sanchez-Contreras M."/>
            <person name="Ramos E.M."/>
            <person name="Lemos R.R."/>
            <person name="Ferreira J."/>
            <person name="Moura D."/>
            <person name="Sobrido M.J."/>
            <person name="Richard A.C."/>
            <person name="Lopez A.R."/>
            <person name="Legati A."/>
            <person name="Deleuze J.F."/>
            <person name="Boland A."/>
            <person name="Quenez O."/>
            <person name="Krystkowiak P."/>
            <person name="Favrole P."/>
            <person name="Geschwind D.H."/>
            <person name="Aran A."/>
            <person name="Segel R."/>
            <person name="Levy-Lahad E."/>
            <person name="Dickson D.W."/>
            <person name="Coppola G."/>
            <person name="Rademakers R."/>
            <person name="de Oliveira J.R.M."/>
        </authorList>
    </citation>
    <scope>VARIANT GLY-55</scope>
    <scope>VARIANTS DMJDS1 ILE-147; ASN-332 AND SER-1091</scope>
</reference>
<keyword id="KW-0106">Calcium</keyword>
<keyword id="KW-0130">Cell adhesion</keyword>
<keyword id="KW-0965">Cell junction</keyword>
<keyword id="KW-1003">Cell membrane</keyword>
<keyword id="KW-0225">Disease variant</keyword>
<keyword id="KW-0887">Epilepsy</keyword>
<keyword id="KW-0325">Glycoprotein</keyword>
<keyword id="KW-0991">Intellectual disability</keyword>
<keyword id="KW-0472">Membrane</keyword>
<keyword id="KW-0597">Phosphoprotein</keyword>
<keyword id="KW-0905">Primary microcephaly</keyword>
<keyword id="KW-1267">Proteomics identification</keyword>
<keyword id="KW-1185">Reference proteome</keyword>
<keyword id="KW-0677">Repeat</keyword>
<keyword id="KW-0964">Secreted</keyword>
<keyword id="KW-0732">Signal</keyword>
<keyword id="KW-0812">Transmembrane</keyword>
<keyword id="KW-1133">Transmembrane helix</keyword>
<name>PCD12_HUMAN</name>
<sequence>MMQLLQLLLGLLGPGGYLFLLGDCQEVTTLTVKYQVSEEVPSGTVIGKLSQELGREERRRQAGAAFQVLQLPQALPIQVDSEEGLLSTGRRLDREQLCRQWDPCLVSFDVLATGDLALIHVEIQVLDINDHQPRFPKGEQELEISESASLRTRIPLDRALDPDTGPNTLHTYTLSPSEHFALDVIVGPDETKHAELIVVKELDREIHSFFDLVLTAYDNGNPPKSGTSLVKVNVLDSNDNSPAFAESSLALEIQEDAAPGTLLIKLTATDPDQGPNGEVEFFLSKHMPPEVLDTFSIDAKTGQVILRRPLDYEKNPAYEVDVQARDLGPNPIPAHCKVLIKVLDVNDNIPSIHVTWASQPSLVSEALPKDSFIALVMADDLDSGHNGLVHCWLSQELGHFRLKRTNGNTYMLLTNATLDREQWPKYTLTLLAQDQGLQPLSAKKQLSIQISDINDNAPVFEKSRYEVSTRENNLPSLHLITIKAHDADLGINGKVSYRIQDSPVAHLVAIDSNTGEVTAQRSLNYEEMAGFEFQVIAEDSGQPMLASSVSVWVSLLDANDNAPEVVQPVLSDGKASLSVLVNASTGHLLVPIETPNGLGPAGTDTPPLATHSSRPFLLTTIVARDADSGANGEPLYSIRSGNEAHLFILNPHTGQLFVNVTNASSLIGSEWELEIVVEDQGSPPLQTRALLRVMFVTSVDHLRDSARKPGALSMSMLTVICLAVLLGIFGLILALFMSICRTEKKDNRAYNCREAESTYRQQPKRPQKHIQKADIHLVPVLRGQAGEPCEVGQSHKDVDKEAMMEAGWDPCLQAPFHLTPTLYRTLRNQGNQGAPAESREVLQDTVNLLFNHPRQRNASRENLNLPEPQPATGQPRSRPLKVAGSPTGRLAGDQGSEEAPQRPPASSATLRRQRHLNGKVSPEKESGPRQILRSLVRLSVAAFAERNPVEELTVDSPPVQQISQLLSLLHQGQFQPKPNHRGNKYLAKPGGSRSAIPDTDGPSARAGGQTDPEQEEGPLDPEEDLSVKQLLEEELSSLLDPSTGLALDRLSAPDPAWMARLSLPLTTNYRDNVISPDAAATEEPRTFQTFGKAEAPELSPTGTRLASTFVSEMSSLLEMLLEQRSSMPVEAASEALRRLSVCGRTLSLDLATSAASGMKVQGDPGGKTGTEGKSRGSSSSSRCL</sequence>
<organism>
    <name type="scientific">Homo sapiens</name>
    <name type="common">Human</name>
    <dbReference type="NCBI Taxonomy" id="9606"/>
    <lineage>
        <taxon>Eukaryota</taxon>
        <taxon>Metazoa</taxon>
        <taxon>Chordata</taxon>
        <taxon>Craniata</taxon>
        <taxon>Vertebrata</taxon>
        <taxon>Euteleostomi</taxon>
        <taxon>Mammalia</taxon>
        <taxon>Eutheria</taxon>
        <taxon>Euarchontoglires</taxon>
        <taxon>Primates</taxon>
        <taxon>Haplorrhini</taxon>
        <taxon>Catarrhini</taxon>
        <taxon>Hominidae</taxon>
        <taxon>Homo</taxon>
    </lineage>
</organism>
<feature type="signal peptide" evidence="2">
    <location>
        <begin position="1"/>
        <end position="24"/>
    </location>
</feature>
<feature type="chain" id="PRO_0000003996" description="Protocadherin-12">
    <location>
        <begin position="25"/>
        <end position="1184"/>
    </location>
</feature>
<feature type="chain" id="PRO_0000444041" description="Protocadherin-12, secreted form" evidence="14">
    <location>
        <begin position="25"/>
        <end status="unknown"/>
    </location>
</feature>
<feature type="topological domain" description="Extracellular" evidence="2">
    <location>
        <begin position="25"/>
        <end position="718"/>
    </location>
</feature>
<feature type="transmembrane region" description="Helical" evidence="2">
    <location>
        <begin position="719"/>
        <end position="739"/>
    </location>
</feature>
<feature type="topological domain" description="Cytoplasmic" evidence="2">
    <location>
        <begin position="740"/>
        <end position="1184"/>
    </location>
</feature>
<feature type="domain" description="Cadherin 1" evidence="3">
    <location>
        <begin position="28"/>
        <end position="135"/>
    </location>
</feature>
<feature type="domain" description="Cadherin 2" evidence="3">
    <location>
        <begin position="136"/>
        <end position="244"/>
    </location>
</feature>
<feature type="domain" description="Cadherin 3" evidence="3">
    <location>
        <begin position="245"/>
        <end position="352"/>
    </location>
</feature>
<feature type="domain" description="Cadherin 4" evidence="3">
    <location>
        <begin position="355"/>
        <end position="460"/>
    </location>
</feature>
<feature type="domain" description="Cadherin 5" evidence="3">
    <location>
        <begin position="461"/>
        <end position="565"/>
    </location>
</feature>
<feature type="domain" description="Cadherin 6" evidence="3">
    <location>
        <begin position="600"/>
        <end position="711"/>
    </location>
</feature>
<feature type="region of interest" description="Disordered" evidence="4">
    <location>
        <begin position="854"/>
        <end position="928"/>
    </location>
</feature>
<feature type="region of interest" description="Disordered" evidence="4">
    <location>
        <begin position="973"/>
        <end position="1023"/>
    </location>
</feature>
<feature type="region of interest" description="Disordered" evidence="4">
    <location>
        <begin position="1153"/>
        <end position="1184"/>
    </location>
</feature>
<feature type="compositionally biased region" description="Acidic residues" evidence="4">
    <location>
        <begin position="1012"/>
        <end position="1023"/>
    </location>
</feature>
<feature type="compositionally biased region" description="Low complexity" evidence="4">
    <location>
        <begin position="1175"/>
        <end position="1184"/>
    </location>
</feature>
<feature type="modified residue" description="Phosphoserine" evidence="1">
    <location>
        <position position="859"/>
    </location>
</feature>
<feature type="modified residue" description="Phosphoserine" evidence="16">
    <location>
        <position position="1062"/>
    </location>
</feature>
<feature type="glycosylation site" description="N-linked (GlcNAc...) asparagine" evidence="2">
    <location>
        <position position="415"/>
    </location>
</feature>
<feature type="glycosylation site" description="N-linked (GlcNAc...) asparagine" evidence="2">
    <location>
        <position position="582"/>
    </location>
</feature>
<feature type="glycosylation site" description="N-linked (GlcNAc...) asparagine" evidence="2">
    <location>
        <position position="659"/>
    </location>
</feature>
<feature type="glycosylation site" description="N-linked (GlcNAc...) asparagine" evidence="2">
    <location>
        <position position="662"/>
    </location>
</feature>
<feature type="sequence variant" id="VAR_080385" description="In dbSNP:rs200451693." evidence="10">
    <original>R</original>
    <variation>G</variation>
    <location>
        <position position="55"/>
    </location>
</feature>
<feature type="sequence variant" id="VAR_080386" description="In DMJDS1; uncertain significance; dbSNP:rs759794990." evidence="10">
    <original>S</original>
    <variation>I</variation>
    <location>
        <position position="147"/>
    </location>
</feature>
<feature type="sequence variant" id="VAR_080387" description="In DMJDS1; uncertain significance; dbSNP:rs146725009." evidence="10">
    <original>I</original>
    <variation>N</variation>
    <location>
        <position position="332"/>
    </location>
</feature>
<feature type="sequence variant" id="VAR_020368" description="In dbSNP:rs164075." evidence="7">
    <original>H</original>
    <variation>N</variation>
    <location>
        <position position="385"/>
    </location>
</feature>
<feature type="sequence variant" id="VAR_020369" description="In dbSNP:rs164515." evidence="6 7">
    <original>S</original>
    <variation>N</variation>
    <location>
        <position position="640"/>
    </location>
</feature>
<feature type="sequence variant" id="VAR_080388" description="In DMJDS1." evidence="9">
    <location>
        <begin position="839"/>
        <end position="1184"/>
    </location>
</feature>
<feature type="sequence variant" id="VAR_080389" description="In DMJDS1; uncertain significance; dbSNP:rs779814208." evidence="10">
    <original>G</original>
    <variation>S</variation>
    <location>
        <position position="1091"/>
    </location>
</feature>
<feature type="sequence conflict" description="In Ref. 4; BAB55016." evidence="13" ref="4">
    <original>HN</original>
    <variation>KD</variation>
    <location>
        <begin position="385"/>
        <end position="386"/>
    </location>
</feature>
<feature type="sequence conflict" description="In Ref. 4; BAB55016." evidence="13" ref="4">
    <original>VH</original>
    <variation>LG</variation>
    <location>
        <begin position="389"/>
        <end position="390"/>
    </location>
</feature>
<feature type="sequence conflict" description="In Ref. 4; BAB14677." evidence="13" ref="4">
    <original>A</original>
    <variation>V</variation>
    <location>
        <position position="442"/>
    </location>
</feature>
<feature type="sequence conflict" description="In Ref. 4; BAB14677." evidence="13" ref="4">
    <original>R</original>
    <variation>W</variation>
    <location>
        <position position="753"/>
    </location>
</feature>
<feature type="sequence conflict" description="In Ref. 4; BAB14837." evidence="13" ref="4">
    <original>A</original>
    <variation>T</variation>
    <location>
        <position position="814"/>
    </location>
</feature>
<feature type="sequence conflict" description="In Ref. 4; BAB14837." evidence="13" ref="4">
    <original>H</original>
    <variation>Y</variation>
    <location>
        <position position="970"/>
    </location>
</feature>
<feature type="sequence conflict" description="In Ref. 4; BAB14677." evidence="13" ref="4">
    <original>S</original>
    <variation>C</variation>
    <location>
        <position position="1051"/>
    </location>
</feature>
<feature type="sequence conflict" description="In Ref. 4; BAB14837." evidence="13" ref="4">
    <original>S</original>
    <variation>SSSS</variation>
    <location>
        <position position="1181"/>
    </location>
</feature>
<comment type="function">
    <text evidence="1 8">Cellular adhesion molecule that may play an important role in cell-cell interactions at interendothelial junctions (By similarity). Acts as a regulator of cell migration, probably via increasing cell-cell adhesion (PubMed:21402705). Promotes homotypic calcium-dependent aggregation and adhesion and clusters at intercellular junctions (By similarity). Unable to bind to catenins, weakly associates with the cytoskeleton (By similarity).</text>
</comment>
<comment type="subcellular location">
    <molecule>Protocadherin-12</molecule>
    <subcellularLocation>
        <location evidence="8">Cell membrane</location>
        <topology evidence="2">Single-pass type I membrane protein</topology>
    </subcellularLocation>
    <subcellularLocation>
        <location evidence="1">Cell junction</location>
    </subcellularLocation>
</comment>
<comment type="subcellular location">
    <molecule>Protocadherin-12, secreted form</molecule>
    <subcellularLocation>
        <location evidence="8">Secreted</location>
    </subcellularLocation>
    <text evidence="8">The secreted form is produced following cleavage by ADAM10.</text>
</comment>
<comment type="tissue specificity">
    <text evidence="5 8">Expressed in highly vascularized tissues including the heart and placenta, but most tissues contain a low level of expression (PubMed:11063261). Prominent expression in the spleen (PubMed:11063261). Present in villous and extravillous trophoblast (at protein level) (PubMed:21402705).</text>
</comment>
<comment type="PTM">
    <molecule>Protocadherin-12</molecule>
    <text evidence="8">Cleaved by ADAM10 close to the transmembrane domain to release the Protocadherin-12, secreted form in the serum. Cleavage results in reduced cellular adhesion in a cell migration assay.</text>
</comment>
<comment type="disease" evidence="9 10">
    <disease id="DI-05123">
        <name>Diencephalic-mesencephalic junction dysplasia syndrome 1</name>
        <acronym>DMJDS1</acronym>
        <description>An autosomal recessive syndrome characterized by severe global developmental delay with profound intellectual disability, spasticity or dystonia, and congenital microcephaly. Brain imaging shows hypothalamic midbrain dysplasia, diencephalic-mesencephalic dysplasia, and intracerebral calcifications.</description>
        <dbReference type="MIM" id="251280"/>
    </disease>
    <text>The disease is caused by variants affecting the gene represented in this entry.</text>
</comment>
<proteinExistence type="evidence at protein level"/>
<evidence type="ECO:0000250" key="1">
    <source>
        <dbReference type="UniProtKB" id="O55134"/>
    </source>
</evidence>
<evidence type="ECO:0000255" key="2"/>
<evidence type="ECO:0000255" key="3">
    <source>
        <dbReference type="PROSITE-ProRule" id="PRU00043"/>
    </source>
</evidence>
<evidence type="ECO:0000256" key="4">
    <source>
        <dbReference type="SAM" id="MobiDB-lite"/>
    </source>
</evidence>
<evidence type="ECO:0000269" key="5">
    <source>
    </source>
</evidence>
<evidence type="ECO:0000269" key="6">
    <source>
    </source>
</evidence>
<evidence type="ECO:0000269" key="7">
    <source>
    </source>
</evidence>
<evidence type="ECO:0000269" key="8">
    <source>
    </source>
</evidence>
<evidence type="ECO:0000269" key="9">
    <source>
    </source>
</evidence>
<evidence type="ECO:0000269" key="10">
    <source>
    </source>
</evidence>
<evidence type="ECO:0000303" key="11">
    <source>
    </source>
</evidence>
<evidence type="ECO:0000303" key="12">
    <source>
    </source>
</evidence>
<evidence type="ECO:0000305" key="13"/>
<evidence type="ECO:0000305" key="14">
    <source>
    </source>
</evidence>
<evidence type="ECO:0000312" key="15">
    <source>
        <dbReference type="HGNC" id="HGNC:8657"/>
    </source>
</evidence>
<evidence type="ECO:0007744" key="16">
    <source>
    </source>
</evidence>
<dbReference type="EMBL" id="AF231025">
    <property type="protein sequence ID" value="AAF61931.1"/>
    <property type="molecule type" value="mRNA"/>
</dbReference>
<dbReference type="EMBL" id="AF240635">
    <property type="protein sequence ID" value="AAF73962.1"/>
    <property type="molecule type" value="mRNA"/>
</dbReference>
<dbReference type="EMBL" id="AB026893">
    <property type="protein sequence ID" value="BAA95162.1"/>
    <property type="molecule type" value="mRNA"/>
</dbReference>
<dbReference type="EMBL" id="AK023785">
    <property type="protein sequence ID" value="BAB14677.1"/>
    <property type="molecule type" value="mRNA"/>
</dbReference>
<dbReference type="EMBL" id="AK024140">
    <property type="protein sequence ID" value="BAB14837.1"/>
    <property type="molecule type" value="mRNA"/>
</dbReference>
<dbReference type="EMBL" id="AK027282">
    <property type="protein sequence ID" value="BAB55016.1"/>
    <property type="molecule type" value="mRNA"/>
</dbReference>
<dbReference type="EMBL" id="AY358428">
    <property type="protein sequence ID" value="AAQ88794.1"/>
    <property type="molecule type" value="mRNA"/>
</dbReference>
<dbReference type="CCDS" id="CCDS4269.1"/>
<dbReference type="RefSeq" id="NP_057664.1">
    <property type="nucleotide sequence ID" value="NM_016580.4"/>
</dbReference>
<dbReference type="SMR" id="Q9NPG4"/>
<dbReference type="BioGRID" id="119445">
    <property type="interactions" value="24"/>
</dbReference>
<dbReference type="DIP" id="DIP-47292N"/>
<dbReference type="FunCoup" id="Q9NPG4">
    <property type="interactions" value="108"/>
</dbReference>
<dbReference type="IntAct" id="Q9NPG4">
    <property type="interactions" value="22"/>
</dbReference>
<dbReference type="MINT" id="Q9NPG4"/>
<dbReference type="STRING" id="9606.ENSP00000231484"/>
<dbReference type="GlyCosmos" id="Q9NPG4">
    <property type="glycosylation" value="5 sites, 1 glycan"/>
</dbReference>
<dbReference type="GlyGen" id="Q9NPG4">
    <property type="glycosylation" value="8 sites, 2 O-linked glycans (4 sites)"/>
</dbReference>
<dbReference type="iPTMnet" id="Q9NPG4"/>
<dbReference type="PhosphoSitePlus" id="Q9NPG4"/>
<dbReference type="BioMuta" id="PCDH12"/>
<dbReference type="DMDM" id="22095989"/>
<dbReference type="jPOST" id="Q9NPG4"/>
<dbReference type="MassIVE" id="Q9NPG4"/>
<dbReference type="PaxDb" id="9606-ENSP00000231484"/>
<dbReference type="PeptideAtlas" id="Q9NPG4"/>
<dbReference type="ProteomicsDB" id="81993"/>
<dbReference type="Antibodypedia" id="27396">
    <property type="antibodies" value="84 antibodies from 26 providers"/>
</dbReference>
<dbReference type="DNASU" id="51294"/>
<dbReference type="Ensembl" id="ENST00000231484.4">
    <property type="protein sequence ID" value="ENSP00000231484.3"/>
    <property type="gene ID" value="ENSG00000113555.6"/>
</dbReference>
<dbReference type="GeneID" id="51294"/>
<dbReference type="KEGG" id="hsa:51294"/>
<dbReference type="MANE-Select" id="ENST00000231484.4">
    <property type="protein sequence ID" value="ENSP00000231484.3"/>
    <property type="RefSeq nucleotide sequence ID" value="NM_016580.4"/>
    <property type="RefSeq protein sequence ID" value="NP_057664.1"/>
</dbReference>
<dbReference type="UCSC" id="uc003llx.4">
    <property type="organism name" value="human"/>
</dbReference>
<dbReference type="AGR" id="HGNC:8657"/>
<dbReference type="CTD" id="51294"/>
<dbReference type="DisGeNET" id="51294"/>
<dbReference type="GeneCards" id="PCDH12"/>
<dbReference type="HGNC" id="HGNC:8657">
    <property type="gene designation" value="PCDH12"/>
</dbReference>
<dbReference type="HPA" id="ENSG00000113555">
    <property type="expression patterns" value="Tissue enhanced (placenta)"/>
</dbReference>
<dbReference type="MalaCards" id="PCDH12"/>
<dbReference type="MIM" id="251280">
    <property type="type" value="phenotype"/>
</dbReference>
<dbReference type="MIM" id="605622">
    <property type="type" value="gene"/>
</dbReference>
<dbReference type="neXtProt" id="NX_Q9NPG4"/>
<dbReference type="OpenTargets" id="ENSG00000113555"/>
<dbReference type="Orphanet" id="319192">
    <property type="disease" value="Diencephalic-mesencephalic junction dysplasia"/>
</dbReference>
<dbReference type="PharmGKB" id="PA32998"/>
<dbReference type="VEuPathDB" id="HostDB:ENSG00000113555"/>
<dbReference type="eggNOG" id="KOG3594">
    <property type="taxonomic scope" value="Eukaryota"/>
</dbReference>
<dbReference type="GeneTree" id="ENSGT00940000160403"/>
<dbReference type="HOGENOM" id="CLU_006480_1_2_1"/>
<dbReference type="InParanoid" id="Q9NPG4"/>
<dbReference type="OMA" id="ALFMSIC"/>
<dbReference type="OrthoDB" id="6252479at2759"/>
<dbReference type="PAN-GO" id="Q9NPG4">
    <property type="GO annotations" value="2 GO annotations based on evolutionary models"/>
</dbReference>
<dbReference type="PhylomeDB" id="Q9NPG4"/>
<dbReference type="TreeFam" id="TF352008"/>
<dbReference type="PathwayCommons" id="Q9NPG4"/>
<dbReference type="SignaLink" id="Q9NPG4"/>
<dbReference type="BioGRID-ORCS" id="51294">
    <property type="hits" value="9 hits in 1143 CRISPR screens"/>
</dbReference>
<dbReference type="ChiTaRS" id="PCDH12">
    <property type="organism name" value="human"/>
</dbReference>
<dbReference type="GeneWiki" id="PCDH12"/>
<dbReference type="GenomeRNAi" id="51294"/>
<dbReference type="Pharos" id="Q9NPG4">
    <property type="development level" value="Tbio"/>
</dbReference>
<dbReference type="PRO" id="PR:Q9NPG4"/>
<dbReference type="Proteomes" id="UP000005640">
    <property type="component" value="Chromosome 5"/>
</dbReference>
<dbReference type="RNAct" id="Q9NPG4">
    <property type="molecule type" value="protein"/>
</dbReference>
<dbReference type="Bgee" id="ENSG00000113555">
    <property type="expression patterns" value="Expressed in tendon of biceps brachii and 155 other cell types or tissues"/>
</dbReference>
<dbReference type="ExpressionAtlas" id="Q9NPG4">
    <property type="expression patterns" value="baseline and differential"/>
</dbReference>
<dbReference type="GO" id="GO:0005911">
    <property type="term" value="C:cell-cell junction"/>
    <property type="evidence" value="ECO:0007669"/>
    <property type="project" value="Ensembl"/>
</dbReference>
<dbReference type="GO" id="GO:0070062">
    <property type="term" value="C:extracellular exosome"/>
    <property type="evidence" value="ECO:0007005"/>
    <property type="project" value="UniProtKB"/>
</dbReference>
<dbReference type="GO" id="GO:0005886">
    <property type="term" value="C:plasma membrane"/>
    <property type="evidence" value="ECO:0000318"/>
    <property type="project" value="GO_Central"/>
</dbReference>
<dbReference type="GO" id="GO:0005509">
    <property type="term" value="F:calcium ion binding"/>
    <property type="evidence" value="ECO:0007669"/>
    <property type="project" value="InterPro"/>
</dbReference>
<dbReference type="GO" id="GO:0016339">
    <property type="term" value="P:calcium-dependent cell-cell adhesion via plasma membrane cell adhesion molecules"/>
    <property type="evidence" value="ECO:0007669"/>
    <property type="project" value="Ensembl"/>
</dbReference>
<dbReference type="GO" id="GO:0007155">
    <property type="term" value="P:cell adhesion"/>
    <property type="evidence" value="ECO:0000318"/>
    <property type="project" value="GO_Central"/>
</dbReference>
<dbReference type="GO" id="GO:0005977">
    <property type="term" value="P:glycogen metabolic process"/>
    <property type="evidence" value="ECO:0007669"/>
    <property type="project" value="Ensembl"/>
</dbReference>
<dbReference type="GO" id="GO:0007156">
    <property type="term" value="P:homophilic cell adhesion via plasma membrane adhesion molecules"/>
    <property type="evidence" value="ECO:0007669"/>
    <property type="project" value="Ensembl"/>
</dbReference>
<dbReference type="GO" id="GO:0060711">
    <property type="term" value="P:labyrinthine layer development"/>
    <property type="evidence" value="ECO:0007669"/>
    <property type="project" value="Ensembl"/>
</dbReference>
<dbReference type="GO" id="GO:0008038">
    <property type="term" value="P:neuron recognition"/>
    <property type="evidence" value="ECO:0000304"/>
    <property type="project" value="ProtInc"/>
</dbReference>
<dbReference type="CDD" id="cd11304">
    <property type="entry name" value="Cadherin_repeat"/>
    <property type="match status" value="6"/>
</dbReference>
<dbReference type="FunFam" id="2.60.40.60:FF:000190">
    <property type="entry name" value="Protocadherin 12"/>
    <property type="match status" value="1"/>
</dbReference>
<dbReference type="FunFam" id="2.60.40.60:FF:000193">
    <property type="entry name" value="Protocadherin 12"/>
    <property type="match status" value="1"/>
</dbReference>
<dbReference type="FunFam" id="2.60.40.60:FF:000247">
    <property type="entry name" value="Protocadherin 12"/>
    <property type="match status" value="1"/>
</dbReference>
<dbReference type="FunFam" id="2.60.40.60:FF:000002">
    <property type="entry name" value="Protocadherin alpha 2"/>
    <property type="match status" value="1"/>
</dbReference>
<dbReference type="FunFam" id="2.60.40.60:FF:000003">
    <property type="entry name" value="Protocadherin alpha 2"/>
    <property type="match status" value="1"/>
</dbReference>
<dbReference type="FunFam" id="2.60.40.60:FF:000007">
    <property type="entry name" value="Protocadherin alpha 2"/>
    <property type="match status" value="1"/>
</dbReference>
<dbReference type="Gene3D" id="2.60.40.60">
    <property type="entry name" value="Cadherins"/>
    <property type="match status" value="6"/>
</dbReference>
<dbReference type="InterPro" id="IPR002126">
    <property type="entry name" value="Cadherin-like_dom"/>
</dbReference>
<dbReference type="InterPro" id="IPR015919">
    <property type="entry name" value="Cadherin-like_sf"/>
</dbReference>
<dbReference type="InterPro" id="IPR020894">
    <property type="entry name" value="Cadherin_CS"/>
</dbReference>
<dbReference type="InterPro" id="IPR013164">
    <property type="entry name" value="Cadherin_N"/>
</dbReference>
<dbReference type="InterPro" id="IPR050174">
    <property type="entry name" value="Protocadherin/Cadherin-CA"/>
</dbReference>
<dbReference type="PANTHER" id="PTHR24028">
    <property type="entry name" value="CADHERIN-87A"/>
    <property type="match status" value="1"/>
</dbReference>
<dbReference type="PANTHER" id="PTHR24028:SF42">
    <property type="entry name" value="PROTOCADHERIN-12"/>
    <property type="match status" value="1"/>
</dbReference>
<dbReference type="Pfam" id="PF00028">
    <property type="entry name" value="Cadherin"/>
    <property type="match status" value="5"/>
</dbReference>
<dbReference type="Pfam" id="PF08266">
    <property type="entry name" value="Cadherin_2"/>
    <property type="match status" value="1"/>
</dbReference>
<dbReference type="PRINTS" id="PR00205">
    <property type="entry name" value="CADHERIN"/>
</dbReference>
<dbReference type="SMART" id="SM00112">
    <property type="entry name" value="CA"/>
    <property type="match status" value="6"/>
</dbReference>
<dbReference type="SUPFAM" id="SSF49313">
    <property type="entry name" value="Cadherin-like"/>
    <property type="match status" value="5"/>
</dbReference>
<dbReference type="PROSITE" id="PS00232">
    <property type="entry name" value="CADHERIN_1"/>
    <property type="match status" value="5"/>
</dbReference>
<dbReference type="PROSITE" id="PS50268">
    <property type="entry name" value="CADHERIN_2"/>
    <property type="match status" value="6"/>
</dbReference>
<gene>
    <name evidence="15" type="primary">PCDH12</name>
    <name evidence="12" type="ORF">UNQ395/PRO731</name>
</gene>